<comment type="function">
    <text evidence="1">Part of the ABC transporter complex HmuTUV involved in hemin import. Responsible for energy coupling to the transport system.</text>
</comment>
<comment type="subunit">
    <text evidence="1">The complex is composed of two ATP-binding proteins (HmuV), two transmembrane proteins (HmuU) and a solute-binding protein (HmuT).</text>
</comment>
<comment type="subcellular location">
    <subcellularLocation>
        <location evidence="1">Cell inner membrane</location>
        <topology evidence="1">Peripheral membrane protein</topology>
    </subcellularLocation>
</comment>
<comment type="similarity">
    <text evidence="1">Belongs to the ABC transporter superfamily. Heme (hemin) importer (TC 3.A.1.14.5) family.</text>
</comment>
<dbReference type="EC" id="7.6.2.-" evidence="1"/>
<dbReference type="EMBL" id="BX936398">
    <property type="protein sequence ID" value="CAH19576.1"/>
    <property type="molecule type" value="Genomic_DNA"/>
</dbReference>
<dbReference type="RefSeq" id="WP_002209058.1">
    <property type="nucleotide sequence ID" value="NZ_CP009712.1"/>
</dbReference>
<dbReference type="SMR" id="Q66FK0"/>
<dbReference type="KEGG" id="ypo:BZ17_2232"/>
<dbReference type="KEGG" id="yps:YPTB0336"/>
<dbReference type="PATRIC" id="fig|273123.14.peg.2365"/>
<dbReference type="PHI-base" id="PHI:7909"/>
<dbReference type="Proteomes" id="UP000001011">
    <property type="component" value="Chromosome"/>
</dbReference>
<dbReference type="GO" id="GO:0005886">
    <property type="term" value="C:plasma membrane"/>
    <property type="evidence" value="ECO:0007669"/>
    <property type="project" value="UniProtKB-SubCell"/>
</dbReference>
<dbReference type="GO" id="GO:0005524">
    <property type="term" value="F:ATP binding"/>
    <property type="evidence" value="ECO:0007669"/>
    <property type="project" value="UniProtKB-KW"/>
</dbReference>
<dbReference type="GO" id="GO:0016887">
    <property type="term" value="F:ATP hydrolysis activity"/>
    <property type="evidence" value="ECO:0007669"/>
    <property type="project" value="InterPro"/>
</dbReference>
<dbReference type="CDD" id="cd03214">
    <property type="entry name" value="ABC_Iron-Siderophores_B12_Hemin"/>
    <property type="match status" value="1"/>
</dbReference>
<dbReference type="FunFam" id="3.40.50.300:FF:000134">
    <property type="entry name" value="Iron-enterobactin ABC transporter ATP-binding protein"/>
    <property type="match status" value="1"/>
</dbReference>
<dbReference type="Gene3D" id="3.40.50.300">
    <property type="entry name" value="P-loop containing nucleotide triphosphate hydrolases"/>
    <property type="match status" value="1"/>
</dbReference>
<dbReference type="InterPro" id="IPR003593">
    <property type="entry name" value="AAA+_ATPase"/>
</dbReference>
<dbReference type="InterPro" id="IPR003439">
    <property type="entry name" value="ABC_transporter-like_ATP-bd"/>
</dbReference>
<dbReference type="InterPro" id="IPR017871">
    <property type="entry name" value="ABC_transporter-like_CS"/>
</dbReference>
<dbReference type="InterPro" id="IPR027417">
    <property type="entry name" value="P-loop_NTPase"/>
</dbReference>
<dbReference type="NCBIfam" id="NF010068">
    <property type="entry name" value="PRK13548.1"/>
    <property type="match status" value="1"/>
</dbReference>
<dbReference type="PANTHER" id="PTHR42794">
    <property type="entry name" value="HEMIN IMPORT ATP-BINDING PROTEIN HMUV"/>
    <property type="match status" value="1"/>
</dbReference>
<dbReference type="PANTHER" id="PTHR42794:SF1">
    <property type="entry name" value="HEMIN IMPORT ATP-BINDING PROTEIN HMUV"/>
    <property type="match status" value="1"/>
</dbReference>
<dbReference type="Pfam" id="PF00005">
    <property type="entry name" value="ABC_tran"/>
    <property type="match status" value="1"/>
</dbReference>
<dbReference type="SMART" id="SM00382">
    <property type="entry name" value="AAA"/>
    <property type="match status" value="1"/>
</dbReference>
<dbReference type="SUPFAM" id="SSF52540">
    <property type="entry name" value="P-loop containing nucleoside triphosphate hydrolases"/>
    <property type="match status" value="1"/>
</dbReference>
<dbReference type="PROSITE" id="PS00211">
    <property type="entry name" value="ABC_TRANSPORTER_1"/>
    <property type="match status" value="1"/>
</dbReference>
<dbReference type="PROSITE" id="PS50893">
    <property type="entry name" value="ABC_TRANSPORTER_2"/>
    <property type="match status" value="1"/>
</dbReference>
<dbReference type="PROSITE" id="PS51261">
    <property type="entry name" value="HMUV"/>
    <property type="match status" value="1"/>
</dbReference>
<organism>
    <name type="scientific">Yersinia pseudotuberculosis serotype I (strain IP32953)</name>
    <dbReference type="NCBI Taxonomy" id="273123"/>
    <lineage>
        <taxon>Bacteria</taxon>
        <taxon>Pseudomonadati</taxon>
        <taxon>Pseudomonadota</taxon>
        <taxon>Gammaproteobacteria</taxon>
        <taxon>Enterobacterales</taxon>
        <taxon>Yersiniaceae</taxon>
        <taxon>Yersinia</taxon>
    </lineage>
</organism>
<sequence length="266" mass="29658">MVDMAVTPVALLEASHLHYHVQQQALINDVSLHIASGEMVAIIGPNGAGKSTLLRLLTGYLSPSHGECHLLGQNLNSWQPKALARTRAVMRQYSELAFPFSVSEVIQMGRAPYGGSQDRQALQQVMAQTDCLALAQRDYRVLSGGEQQRVQLARVLAQLWQPQPTPRWLFLDEPTSALDLYHQQHTLRLLRQLTRQEPLAVCCVLHDLNLAALYADRIMLLAQGKLVACGTPEEVLNAETLTQWYQADLGVSRHPESALPQIYLRQ</sequence>
<proteinExistence type="inferred from homology"/>
<evidence type="ECO:0000255" key="1">
    <source>
        <dbReference type="HAMAP-Rule" id="MF_01718"/>
    </source>
</evidence>
<gene>
    <name evidence="1" type="primary">hmuV</name>
    <name type="ordered locus">YPTB0336</name>
</gene>
<reference key="1">
    <citation type="journal article" date="2004" name="Proc. Natl. Acad. Sci. U.S.A.">
        <title>Insights into the evolution of Yersinia pestis through whole-genome comparison with Yersinia pseudotuberculosis.</title>
        <authorList>
            <person name="Chain P.S.G."/>
            <person name="Carniel E."/>
            <person name="Larimer F.W."/>
            <person name="Lamerdin J."/>
            <person name="Stoutland P.O."/>
            <person name="Regala W.M."/>
            <person name="Georgescu A.M."/>
            <person name="Vergez L.M."/>
            <person name="Land M.L."/>
            <person name="Motin V.L."/>
            <person name="Brubaker R.R."/>
            <person name="Fowler J."/>
            <person name="Hinnebusch J."/>
            <person name="Marceau M."/>
            <person name="Medigue C."/>
            <person name="Simonet M."/>
            <person name="Chenal-Francisque V."/>
            <person name="Souza B."/>
            <person name="Dacheux D."/>
            <person name="Elliott J.M."/>
            <person name="Derbise A."/>
            <person name="Hauser L.J."/>
            <person name="Garcia E."/>
        </authorList>
    </citation>
    <scope>NUCLEOTIDE SEQUENCE [LARGE SCALE GENOMIC DNA]</scope>
    <source>
        <strain>IP32953</strain>
    </source>
</reference>
<feature type="chain" id="PRO_0000269643" description="Hemin import ATP-binding protein HmuV">
    <location>
        <begin position="1"/>
        <end position="266"/>
    </location>
</feature>
<feature type="domain" description="ABC transporter" evidence="1">
    <location>
        <begin position="12"/>
        <end position="248"/>
    </location>
</feature>
<feature type="binding site" evidence="1">
    <location>
        <begin position="44"/>
        <end position="51"/>
    </location>
    <ligand>
        <name>ATP</name>
        <dbReference type="ChEBI" id="CHEBI:30616"/>
    </ligand>
</feature>
<name>HMUV_YERPS</name>
<keyword id="KW-0067">ATP-binding</keyword>
<keyword id="KW-0997">Cell inner membrane</keyword>
<keyword id="KW-1003">Cell membrane</keyword>
<keyword id="KW-0472">Membrane</keyword>
<keyword id="KW-0547">Nucleotide-binding</keyword>
<keyword id="KW-1278">Translocase</keyword>
<keyword id="KW-0813">Transport</keyword>
<accession>Q66FK0</accession>
<protein>
    <recommendedName>
        <fullName evidence="1">Hemin import ATP-binding protein HmuV</fullName>
        <ecNumber evidence="1">7.6.2.-</ecNumber>
    </recommendedName>
</protein>